<reference key="1">
    <citation type="submission" date="2006-01" db="EMBL/GenBank/DDBJ databases">
        <title>Complete sequence of Rhodopseudomonas palustris HaA2.</title>
        <authorList>
            <consortium name="US DOE Joint Genome Institute"/>
            <person name="Copeland A."/>
            <person name="Lucas S."/>
            <person name="Lapidus A."/>
            <person name="Barry K."/>
            <person name="Detter J.C."/>
            <person name="Glavina T."/>
            <person name="Hammon N."/>
            <person name="Israni S."/>
            <person name="Pitluck S."/>
            <person name="Chain P."/>
            <person name="Malfatti S."/>
            <person name="Shin M."/>
            <person name="Vergez L."/>
            <person name="Schmutz J."/>
            <person name="Larimer F."/>
            <person name="Land M."/>
            <person name="Hauser L."/>
            <person name="Pelletier D.A."/>
            <person name="Kyrpides N."/>
            <person name="Anderson I."/>
            <person name="Oda Y."/>
            <person name="Harwood C.S."/>
            <person name="Richardson P."/>
        </authorList>
    </citation>
    <scope>NUCLEOTIDE SEQUENCE [LARGE SCALE GENOMIC DNA]</scope>
    <source>
        <strain>HaA2</strain>
    </source>
</reference>
<evidence type="ECO:0000255" key="1">
    <source>
        <dbReference type="HAMAP-Rule" id="MF_01025"/>
    </source>
</evidence>
<gene>
    <name evidence="1" type="primary">leuA</name>
    <name type="ordered locus">RPB_3330</name>
</gene>
<dbReference type="EC" id="2.3.3.13" evidence="1"/>
<dbReference type="EMBL" id="CP000250">
    <property type="protein sequence ID" value="ABD08026.1"/>
    <property type="molecule type" value="Genomic_DNA"/>
</dbReference>
<dbReference type="RefSeq" id="WP_011442210.1">
    <property type="nucleotide sequence ID" value="NC_007778.1"/>
</dbReference>
<dbReference type="SMR" id="Q2IUT4"/>
<dbReference type="STRING" id="316058.RPB_3330"/>
<dbReference type="KEGG" id="rpb:RPB_3330"/>
<dbReference type="eggNOG" id="COG0119">
    <property type="taxonomic scope" value="Bacteria"/>
</dbReference>
<dbReference type="HOGENOM" id="CLU_022158_0_1_5"/>
<dbReference type="OrthoDB" id="9803573at2"/>
<dbReference type="UniPathway" id="UPA00048">
    <property type="reaction ID" value="UER00070"/>
</dbReference>
<dbReference type="Proteomes" id="UP000008809">
    <property type="component" value="Chromosome"/>
</dbReference>
<dbReference type="GO" id="GO:0005829">
    <property type="term" value="C:cytosol"/>
    <property type="evidence" value="ECO:0007669"/>
    <property type="project" value="TreeGrafter"/>
</dbReference>
<dbReference type="GO" id="GO:0003852">
    <property type="term" value="F:2-isopropylmalate synthase activity"/>
    <property type="evidence" value="ECO:0007669"/>
    <property type="project" value="UniProtKB-UniRule"/>
</dbReference>
<dbReference type="GO" id="GO:0003985">
    <property type="term" value="F:acetyl-CoA C-acetyltransferase activity"/>
    <property type="evidence" value="ECO:0007669"/>
    <property type="project" value="UniProtKB-UniRule"/>
</dbReference>
<dbReference type="GO" id="GO:0030145">
    <property type="term" value="F:manganese ion binding"/>
    <property type="evidence" value="ECO:0007669"/>
    <property type="project" value="UniProtKB-UniRule"/>
</dbReference>
<dbReference type="GO" id="GO:0009098">
    <property type="term" value="P:L-leucine biosynthetic process"/>
    <property type="evidence" value="ECO:0007669"/>
    <property type="project" value="UniProtKB-UniRule"/>
</dbReference>
<dbReference type="CDD" id="cd07940">
    <property type="entry name" value="DRE_TIM_IPMS"/>
    <property type="match status" value="1"/>
</dbReference>
<dbReference type="FunFam" id="1.10.238.260:FF:000001">
    <property type="entry name" value="2-isopropylmalate synthase"/>
    <property type="match status" value="1"/>
</dbReference>
<dbReference type="FunFam" id="3.20.20.70:FF:000010">
    <property type="entry name" value="2-isopropylmalate synthase"/>
    <property type="match status" value="1"/>
</dbReference>
<dbReference type="FunFam" id="3.30.160.270:FF:000003">
    <property type="entry name" value="2-isopropylmalate synthase"/>
    <property type="match status" value="1"/>
</dbReference>
<dbReference type="Gene3D" id="1.10.238.260">
    <property type="match status" value="1"/>
</dbReference>
<dbReference type="Gene3D" id="3.30.160.270">
    <property type="match status" value="1"/>
</dbReference>
<dbReference type="Gene3D" id="3.20.20.70">
    <property type="entry name" value="Aldolase class I"/>
    <property type="match status" value="1"/>
</dbReference>
<dbReference type="HAMAP" id="MF_01025">
    <property type="entry name" value="LeuA_type1"/>
    <property type="match status" value="1"/>
</dbReference>
<dbReference type="InterPro" id="IPR050073">
    <property type="entry name" value="2-IPM_HCS-like"/>
</dbReference>
<dbReference type="InterPro" id="IPR013709">
    <property type="entry name" value="2-isopropylmalate_synth_dimer"/>
</dbReference>
<dbReference type="InterPro" id="IPR002034">
    <property type="entry name" value="AIPM/Hcit_synth_CS"/>
</dbReference>
<dbReference type="InterPro" id="IPR013785">
    <property type="entry name" value="Aldolase_TIM"/>
</dbReference>
<dbReference type="InterPro" id="IPR054691">
    <property type="entry name" value="LeuA/HCS_post-cat"/>
</dbReference>
<dbReference type="InterPro" id="IPR036230">
    <property type="entry name" value="LeuA_allosteric_dom_sf"/>
</dbReference>
<dbReference type="InterPro" id="IPR005671">
    <property type="entry name" value="LeuA_bact_synth"/>
</dbReference>
<dbReference type="InterPro" id="IPR000891">
    <property type="entry name" value="PYR_CT"/>
</dbReference>
<dbReference type="NCBIfam" id="TIGR00973">
    <property type="entry name" value="leuA_bact"/>
    <property type="match status" value="1"/>
</dbReference>
<dbReference type="NCBIfam" id="NF002086">
    <property type="entry name" value="PRK00915.1-3"/>
    <property type="match status" value="1"/>
</dbReference>
<dbReference type="NCBIfam" id="NF002087">
    <property type="entry name" value="PRK00915.1-4"/>
    <property type="match status" value="1"/>
</dbReference>
<dbReference type="PANTHER" id="PTHR10277:SF9">
    <property type="entry name" value="2-ISOPROPYLMALATE SYNTHASE 1, CHLOROPLASTIC-RELATED"/>
    <property type="match status" value="1"/>
</dbReference>
<dbReference type="PANTHER" id="PTHR10277">
    <property type="entry name" value="HOMOCITRATE SYNTHASE-RELATED"/>
    <property type="match status" value="1"/>
</dbReference>
<dbReference type="Pfam" id="PF22617">
    <property type="entry name" value="HCS_D2"/>
    <property type="match status" value="1"/>
</dbReference>
<dbReference type="Pfam" id="PF00682">
    <property type="entry name" value="HMGL-like"/>
    <property type="match status" value="1"/>
</dbReference>
<dbReference type="Pfam" id="PF08502">
    <property type="entry name" value="LeuA_dimer"/>
    <property type="match status" value="1"/>
</dbReference>
<dbReference type="SMART" id="SM00917">
    <property type="entry name" value="LeuA_dimer"/>
    <property type="match status" value="1"/>
</dbReference>
<dbReference type="SUPFAM" id="SSF110921">
    <property type="entry name" value="2-isopropylmalate synthase LeuA, allosteric (dimerisation) domain"/>
    <property type="match status" value="1"/>
</dbReference>
<dbReference type="SUPFAM" id="SSF51569">
    <property type="entry name" value="Aldolase"/>
    <property type="match status" value="1"/>
</dbReference>
<dbReference type="PROSITE" id="PS00815">
    <property type="entry name" value="AIPM_HOMOCIT_SYNTH_1"/>
    <property type="match status" value="1"/>
</dbReference>
<dbReference type="PROSITE" id="PS00816">
    <property type="entry name" value="AIPM_HOMOCIT_SYNTH_2"/>
    <property type="match status" value="1"/>
</dbReference>
<dbReference type="PROSITE" id="PS50991">
    <property type="entry name" value="PYR_CT"/>
    <property type="match status" value="1"/>
</dbReference>
<feature type="chain" id="PRO_1000149256" description="2-isopropylmalate synthase">
    <location>
        <begin position="1"/>
        <end position="524"/>
    </location>
</feature>
<feature type="domain" description="Pyruvate carboxyltransferase" evidence="1">
    <location>
        <begin position="12"/>
        <end position="274"/>
    </location>
</feature>
<feature type="region of interest" description="Regulatory domain" evidence="1">
    <location>
        <begin position="398"/>
        <end position="524"/>
    </location>
</feature>
<feature type="binding site" evidence="1">
    <location>
        <position position="21"/>
    </location>
    <ligand>
        <name>Mn(2+)</name>
        <dbReference type="ChEBI" id="CHEBI:29035"/>
    </ligand>
</feature>
<feature type="binding site" evidence="1">
    <location>
        <position position="209"/>
    </location>
    <ligand>
        <name>Mn(2+)</name>
        <dbReference type="ChEBI" id="CHEBI:29035"/>
    </ligand>
</feature>
<feature type="binding site" evidence="1">
    <location>
        <position position="211"/>
    </location>
    <ligand>
        <name>Mn(2+)</name>
        <dbReference type="ChEBI" id="CHEBI:29035"/>
    </ligand>
</feature>
<feature type="binding site" evidence="1">
    <location>
        <position position="245"/>
    </location>
    <ligand>
        <name>Mn(2+)</name>
        <dbReference type="ChEBI" id="CHEBI:29035"/>
    </ligand>
</feature>
<comment type="function">
    <text evidence="1">Catalyzes the condensation of the acetyl group of acetyl-CoA with 3-methyl-2-oxobutanoate (2-ketoisovalerate) to form 3-carboxy-3-hydroxy-4-methylpentanoate (2-isopropylmalate).</text>
</comment>
<comment type="catalytic activity">
    <reaction evidence="1">
        <text>3-methyl-2-oxobutanoate + acetyl-CoA + H2O = (2S)-2-isopropylmalate + CoA + H(+)</text>
        <dbReference type="Rhea" id="RHEA:21524"/>
        <dbReference type="ChEBI" id="CHEBI:1178"/>
        <dbReference type="ChEBI" id="CHEBI:11851"/>
        <dbReference type="ChEBI" id="CHEBI:15377"/>
        <dbReference type="ChEBI" id="CHEBI:15378"/>
        <dbReference type="ChEBI" id="CHEBI:57287"/>
        <dbReference type="ChEBI" id="CHEBI:57288"/>
        <dbReference type="EC" id="2.3.3.13"/>
    </reaction>
</comment>
<comment type="cofactor">
    <cofactor evidence="1">
        <name>Mn(2+)</name>
        <dbReference type="ChEBI" id="CHEBI:29035"/>
    </cofactor>
</comment>
<comment type="pathway">
    <text evidence="1">Amino-acid biosynthesis; L-leucine biosynthesis; L-leucine from 3-methyl-2-oxobutanoate: step 1/4.</text>
</comment>
<comment type="subunit">
    <text evidence="1">Homodimer.</text>
</comment>
<comment type="subcellular location">
    <subcellularLocation>
        <location evidence="1">Cytoplasm</location>
    </subcellularLocation>
</comment>
<comment type="similarity">
    <text evidence="1">Belongs to the alpha-IPM synthase/homocitrate synthase family. LeuA type 1 subfamily.</text>
</comment>
<name>LEU1_RHOP2</name>
<proteinExistence type="inferred from homology"/>
<keyword id="KW-0028">Amino-acid biosynthesis</keyword>
<keyword id="KW-0100">Branched-chain amino acid biosynthesis</keyword>
<keyword id="KW-0963">Cytoplasm</keyword>
<keyword id="KW-0432">Leucine biosynthesis</keyword>
<keyword id="KW-0464">Manganese</keyword>
<keyword id="KW-0479">Metal-binding</keyword>
<keyword id="KW-1185">Reference proteome</keyword>
<keyword id="KW-0808">Transferase</keyword>
<organism>
    <name type="scientific">Rhodopseudomonas palustris (strain HaA2)</name>
    <dbReference type="NCBI Taxonomy" id="316058"/>
    <lineage>
        <taxon>Bacteria</taxon>
        <taxon>Pseudomonadati</taxon>
        <taxon>Pseudomonadota</taxon>
        <taxon>Alphaproteobacteria</taxon>
        <taxon>Hyphomicrobiales</taxon>
        <taxon>Nitrobacteraceae</taxon>
        <taxon>Rhodopseudomonas</taxon>
    </lineage>
</organism>
<sequence>MTTTPKSEQDRVIIFDTTLRDGEQCPGATMTFEEKLNVARMLDDMGVDVIEAGYPFASDGDFEAVHEIAKRSKNSVICGLSRASHKDIDRCAEAIKPAERGRIHTFLSTSPVHMKYKLQMEAAQVYEMVISSVTRARNHTDDVEWSAEDATRTEFDFLCRCIEAAIKAGATTINLPDTVGYAVPEEYREMFRKVRETVPNSDKARFSVHCHNDLGMAVANSMAGVAGGARQIECTINGIGERAGNAALEELVMAMRVRQDKLPYWNNIETTMLTHASKTVSAATSFPVQYNKAIVGRNAFAHESGIHQDGMIKNAQTYEIMTPETVGVKGTSLVMGKHSGRAGLIHKLEELGYKLSRNQIEDVFVRFKALADRKKDVYDEDIEALVDEQLLHGQDQIKLNSLTVIAGTHGPQRATMKLDVDGQIRIEEAEGNGPVDAVFNCIKALVPHDAKLELYQVHAVTEGTDAQAEVSVRLSHEGRSMTARAADPDTLVASAKAYLGALNKIVAKRQRDVREAVPAVAAAG</sequence>
<accession>Q2IUT4</accession>
<protein>
    <recommendedName>
        <fullName evidence="1">2-isopropylmalate synthase</fullName>
        <ecNumber evidence="1">2.3.3.13</ecNumber>
    </recommendedName>
    <alternativeName>
        <fullName evidence="1">Alpha-IPM synthase</fullName>
    </alternativeName>
    <alternativeName>
        <fullName evidence="1">Alpha-isopropylmalate synthase</fullName>
    </alternativeName>
</protein>